<sequence length="71" mass="7875">XETYGEPGNTPDDYVHAHNNIRRVLGMXPKXQGAIDGSSXVQLXLDEXLDYDYNXNKXIKPPGNVVGQLPY</sequence>
<evidence type="ECO:0000269" key="1">
    <source>
    </source>
</evidence>
<evidence type="ECO:0000269" key="2">
    <source>
    </source>
</evidence>
<evidence type="ECO:0000305" key="3"/>
<organism>
    <name type="scientific">Artemisia vulgaris</name>
    <name type="common">Mugwort</name>
    <dbReference type="NCBI Taxonomy" id="4220"/>
    <lineage>
        <taxon>Eukaryota</taxon>
        <taxon>Viridiplantae</taxon>
        <taxon>Streptophyta</taxon>
        <taxon>Embryophyta</taxon>
        <taxon>Tracheophyta</taxon>
        <taxon>Spermatophyta</taxon>
        <taxon>Magnoliopsida</taxon>
        <taxon>eudicotyledons</taxon>
        <taxon>Gunneridae</taxon>
        <taxon>Pentapetalae</taxon>
        <taxon>asterids</taxon>
        <taxon>campanulids</taxon>
        <taxon>Asterales</taxon>
        <taxon>Asteraceae</taxon>
        <taxon>Asteroideae</taxon>
        <taxon>Anthemideae</taxon>
        <taxon>Artemisiinae</taxon>
        <taxon>Artemisia</taxon>
    </lineage>
</organism>
<reference key="1">
    <citation type="journal article" date="1991" name="J. Biol. Chem.">
        <title>Structural analysis of the glycoprotein allergen Art v II from the pollen of mugwort (Artemisia vulgaris L.).</title>
        <authorList>
            <person name="Nilsen B.M."/>
            <person name="Sletten K."/>
            <person name="Paulsen B.S."/>
            <person name="O'Neill M."/>
            <person name="van Halbeek H."/>
        </authorList>
    </citation>
    <scope>PROTEIN SEQUENCE</scope>
    <scope>GLYCOSYLATION</scope>
    <source>
        <tissue>Pollen</tissue>
    </source>
</reference>
<reference key="2">
    <citation type="journal article" date="1990" name="Mol. Immunol.">
        <title>Isolation and characterization of a glycoprotein allergen, Art v II, from pollen of mugwort (Artemisia vulgaris L.).</title>
        <authorList>
            <person name="Nilsen B.M."/>
            <person name="Paulsen B.S."/>
        </authorList>
    </citation>
    <scope>IDENTIFICATION</scope>
    <scope>GLYCOSYLATION</scope>
</reference>
<dbReference type="PIR" id="A38624">
    <property type="entry name" value="A38624"/>
</dbReference>
<dbReference type="Allergome" id="3103">
    <property type="allergen name" value="Art v 2.0101"/>
</dbReference>
<dbReference type="Allergome" id="58">
    <property type="allergen name" value="Art v 2"/>
</dbReference>
<proteinExistence type="evidence at protein level"/>
<protein>
    <recommendedName>
        <fullName>Allergen Art v 2</fullName>
    </recommendedName>
    <alternativeName>
        <fullName>Allergen Ag7</fullName>
    </alternativeName>
    <alternativeName>
        <fullName>Allergen Art v II</fullName>
    </alternativeName>
    <allergenName>Art v 2</allergenName>
</protein>
<accession>Q7M1G9</accession>
<comment type="PTM">
    <text evidence="1 2">Glycosylated. High-mannose oligosaccharides (Man(5-9)GlcNAc(2)).</text>
</comment>
<comment type="allergen">
    <text>Causes an allergic reaction in human.</text>
</comment>
<comment type="miscellaneous">
    <text>Consists of 6 isoforms with different pI. The IgE-binding epitopes are not significantly affected by the deglycosylation of the allergen.</text>
</comment>
<name>ALL2_ARTVU</name>
<feature type="chain" id="PRO_0000064558" description="Allergen Art v 2">
    <location>
        <begin position="1"/>
        <end position="71"/>
    </location>
</feature>
<feature type="unsure residue">
    <location>
        <position position="20"/>
    </location>
</feature>
<feature type="unsure residue">
    <location>
        <position position="23"/>
    </location>
</feature>
<feature type="unsure residue" description="L or K">
    <location>
        <position position="25"/>
    </location>
</feature>
<feature type="unsure residue">
    <location>
        <position position="61"/>
    </location>
</feature>
<feature type="unsure residue" description="L or K">
    <location>
        <position position="69"/>
    </location>
</feature>
<feature type="non-consecutive residues" evidence="3">
    <location>
        <begin position="30"/>
        <end position="31"/>
    </location>
</feature>
<feature type="non-consecutive residues" evidence="3">
    <location>
        <begin position="39"/>
        <end position="40"/>
    </location>
</feature>
<feature type="non-consecutive residues" evidence="3">
    <location>
        <begin position="60"/>
        <end position="61"/>
    </location>
</feature>
<keyword id="KW-0020">Allergen</keyword>
<keyword id="KW-0903">Direct protein sequencing</keyword>
<keyword id="KW-0325">Glycoprotein</keyword>